<keyword id="KW-0002">3D-structure</keyword>
<keyword id="KW-0963">Cytoplasm</keyword>
<keyword id="KW-0903">Direct protein sequencing</keyword>
<keyword id="KW-0539">Nucleus</keyword>
<keyword id="KW-1185">Reference proteome</keyword>
<keyword id="KW-0804">Transcription</keyword>
<comment type="function">
    <text>TFIIA is a component of the transcription machinery of RNA polymerase II and implicated in the regulation of basal transcription. Interacts with TBP (the TATA-binding protein).</text>
</comment>
<comment type="subunit">
    <text evidence="2">TFIIA is a heterodimer composed of the large TOA1 and a small TOA2 subunits. Interacts with KAP122.</text>
</comment>
<comment type="interaction">
    <interactant intactId="EBI-19316">
        <id>P32773</id>
    </interactant>
    <interactant intactId="EBI-19323">
        <id>P32774</id>
        <label>TOA2</label>
    </interactant>
    <organismsDiffer>false</organismsDiffer>
    <experiments>3</experiments>
</comment>
<comment type="subcellular location">
    <subcellularLocation>
        <location evidence="2">Cytoplasm</location>
    </subcellularLocation>
    <subcellularLocation>
        <location evidence="2">Nucleus</location>
    </subcellularLocation>
    <text>Imported to nucleus via interaction with KAP122.</text>
</comment>
<comment type="similarity">
    <text evidence="3">Belongs to the TFIIA subunit 1 family.</text>
</comment>
<name>TOA1_YEAST</name>
<reference key="1">
    <citation type="journal article" date="1992" name="Science">
        <title>Isolation of two genes that encode subunits of the yeast transcription factor IIA.</title>
        <authorList>
            <person name="Ranish J.A."/>
            <person name="Lane W.S."/>
            <person name="Hahn S."/>
        </authorList>
    </citation>
    <scope>NUCLEOTIDE SEQUENCE</scope>
    <scope>PROTEIN SEQUENCE OF 9-21 AND 23-39</scope>
</reference>
<reference key="2">
    <citation type="journal article" date="1997" name="Nature">
        <title>The nucleotide sequence of Saccharomyces cerevisiae chromosome XV.</title>
        <authorList>
            <person name="Dujon B."/>
            <person name="Albermann K."/>
            <person name="Aldea M."/>
            <person name="Alexandraki D."/>
            <person name="Ansorge W."/>
            <person name="Arino J."/>
            <person name="Benes V."/>
            <person name="Bohn C."/>
            <person name="Bolotin-Fukuhara M."/>
            <person name="Bordonne R."/>
            <person name="Boyer J."/>
            <person name="Camasses A."/>
            <person name="Casamayor A."/>
            <person name="Casas C."/>
            <person name="Cheret G."/>
            <person name="Cziepluch C."/>
            <person name="Daignan-Fornier B."/>
            <person name="Dang V.-D."/>
            <person name="de Haan M."/>
            <person name="Delius H."/>
            <person name="Durand P."/>
            <person name="Fairhead C."/>
            <person name="Feldmann H."/>
            <person name="Gaillon L."/>
            <person name="Galisson F."/>
            <person name="Gamo F.-J."/>
            <person name="Gancedo C."/>
            <person name="Goffeau A."/>
            <person name="Goulding S.E."/>
            <person name="Grivell L.A."/>
            <person name="Habbig B."/>
            <person name="Hand N.J."/>
            <person name="Hani J."/>
            <person name="Hattenhorst U."/>
            <person name="Hebling U."/>
            <person name="Hernando Y."/>
            <person name="Herrero E."/>
            <person name="Heumann K."/>
            <person name="Hiesel R."/>
            <person name="Hilger F."/>
            <person name="Hofmann B."/>
            <person name="Hollenberg C.P."/>
            <person name="Hughes B."/>
            <person name="Jauniaux J.-C."/>
            <person name="Kalogeropoulos A."/>
            <person name="Katsoulou C."/>
            <person name="Kordes E."/>
            <person name="Lafuente M.J."/>
            <person name="Landt O."/>
            <person name="Louis E.J."/>
            <person name="Maarse A.C."/>
            <person name="Madania A."/>
            <person name="Mannhaupt G."/>
            <person name="Marck C."/>
            <person name="Martin R.P."/>
            <person name="Mewes H.-W."/>
            <person name="Michaux G."/>
            <person name="Paces V."/>
            <person name="Parle-McDermott A.G."/>
            <person name="Pearson B.M."/>
            <person name="Perrin A."/>
            <person name="Pettersson B."/>
            <person name="Poch O."/>
            <person name="Pohl T.M."/>
            <person name="Poirey R."/>
            <person name="Portetelle D."/>
            <person name="Pujol A."/>
            <person name="Purnelle B."/>
            <person name="Ramezani Rad M."/>
            <person name="Rechmann S."/>
            <person name="Schwager C."/>
            <person name="Schweizer M."/>
            <person name="Sor F."/>
            <person name="Sterky F."/>
            <person name="Tarassov I.A."/>
            <person name="Teodoru C."/>
            <person name="Tettelin H."/>
            <person name="Thierry A."/>
            <person name="Tobiasch E."/>
            <person name="Tzermia M."/>
            <person name="Uhlen M."/>
            <person name="Unseld M."/>
            <person name="Valens M."/>
            <person name="Vandenbol M."/>
            <person name="Vetter I."/>
            <person name="Vlcek C."/>
            <person name="Voet M."/>
            <person name="Volckaert G."/>
            <person name="Voss H."/>
            <person name="Wambutt R."/>
            <person name="Wedler H."/>
            <person name="Wiemann S."/>
            <person name="Winsor B."/>
            <person name="Wolfe K.H."/>
            <person name="Zollner A."/>
            <person name="Zumstein E."/>
            <person name="Kleine K."/>
        </authorList>
    </citation>
    <scope>NUCLEOTIDE SEQUENCE [LARGE SCALE GENOMIC DNA]</scope>
    <source>
        <strain>ATCC 204508 / S288c</strain>
    </source>
</reference>
<reference key="3">
    <citation type="journal article" date="2014" name="G3 (Bethesda)">
        <title>The reference genome sequence of Saccharomyces cerevisiae: Then and now.</title>
        <authorList>
            <person name="Engel S.R."/>
            <person name="Dietrich F.S."/>
            <person name="Fisk D.G."/>
            <person name="Binkley G."/>
            <person name="Balakrishnan R."/>
            <person name="Costanzo M.C."/>
            <person name="Dwight S.S."/>
            <person name="Hitz B.C."/>
            <person name="Karra K."/>
            <person name="Nash R.S."/>
            <person name="Weng S."/>
            <person name="Wong E.D."/>
            <person name="Lloyd P."/>
            <person name="Skrzypek M.S."/>
            <person name="Miyasato S.R."/>
            <person name="Simison M."/>
            <person name="Cherry J.M."/>
        </authorList>
    </citation>
    <scope>GENOME REANNOTATION</scope>
    <source>
        <strain>ATCC 204508 / S288c</strain>
    </source>
</reference>
<reference key="4">
    <citation type="journal article" date="2007" name="Genome Res.">
        <title>Approaching a complete repository of sequence-verified protein-encoding clones for Saccharomyces cerevisiae.</title>
        <authorList>
            <person name="Hu Y."/>
            <person name="Rolfs A."/>
            <person name="Bhullar B."/>
            <person name="Murthy T.V.S."/>
            <person name="Zhu C."/>
            <person name="Berger M.F."/>
            <person name="Camargo A.A."/>
            <person name="Kelley F."/>
            <person name="McCarron S."/>
            <person name="Jepson D."/>
            <person name="Richardson A."/>
            <person name="Raphael J."/>
            <person name="Moreira D."/>
            <person name="Taycher E."/>
            <person name="Zuo D."/>
            <person name="Mohr S."/>
            <person name="Kane M.F."/>
            <person name="Williamson J."/>
            <person name="Simpson A.J.G."/>
            <person name="Bulyk M.L."/>
            <person name="Harlow E."/>
            <person name="Marsischky G."/>
            <person name="Kolodner R.D."/>
            <person name="LaBaer J."/>
        </authorList>
    </citation>
    <scope>NUCLEOTIDE SEQUENCE [GENOMIC DNA]</scope>
    <source>
        <strain>ATCC 204508 / S288c</strain>
    </source>
</reference>
<reference key="5">
    <citation type="journal article" date="1999" name="J. Cell Biol.">
        <title>The karyopherin Kap122p/Pdr6p imports both subunits of the transcription factor IIA into the nucleus.</title>
        <authorList>
            <person name="Titov A.A."/>
            <person name="Blobel G."/>
        </authorList>
    </citation>
    <scope>INTERACTION WITH KAP122 AND TOA2</scope>
    <scope>SUBCELLULAR LOCATION</scope>
</reference>
<reference key="6">
    <citation type="journal article" date="1996" name="Nature">
        <title>Crystal structure of a yeast TFIIA/TBP/DNA complex.</title>
        <authorList>
            <person name="Tan S."/>
            <person name="Hunziker Y."/>
            <person name="Sargent D.F."/>
            <person name="Richmond T.J."/>
        </authorList>
    </citation>
    <scope>X-RAY CRYSTALLOGRAPHY (2.5 ANGSTROMS) OF 2-54 AND 210-286</scope>
</reference>
<gene>
    <name type="primary">TOA1</name>
    <name type="ordered locus">YOR194C</name>
</gene>
<dbReference type="EMBL" id="M85248">
    <property type="protein sequence ID" value="AAA19654.1"/>
    <property type="molecule type" value="Unassigned_DNA"/>
</dbReference>
<dbReference type="EMBL" id="Z75102">
    <property type="protein sequence ID" value="CAA99407.1"/>
    <property type="molecule type" value="Genomic_DNA"/>
</dbReference>
<dbReference type="EMBL" id="AY693223">
    <property type="protein sequence ID" value="AAT93242.1"/>
    <property type="molecule type" value="Genomic_DNA"/>
</dbReference>
<dbReference type="EMBL" id="BK006948">
    <property type="protein sequence ID" value="DAA10969.1"/>
    <property type="molecule type" value="Genomic_DNA"/>
</dbReference>
<dbReference type="PIR" id="B41810">
    <property type="entry name" value="B41810"/>
</dbReference>
<dbReference type="RefSeq" id="NP_014837.1">
    <property type="nucleotide sequence ID" value="NM_001183613.1"/>
</dbReference>
<dbReference type="PDB" id="1NH2">
    <property type="method" value="X-ray"/>
    <property type="resolution" value="1.90 A"/>
    <property type="chains" value="B=2-54, C=210-286"/>
</dbReference>
<dbReference type="PDB" id="1RM1">
    <property type="method" value="X-ray"/>
    <property type="resolution" value="2.50 A"/>
    <property type="chains" value="C=1-286"/>
</dbReference>
<dbReference type="PDB" id="1YTF">
    <property type="method" value="X-ray"/>
    <property type="resolution" value="2.50 A"/>
    <property type="chains" value="B=2-54, C=210-286"/>
</dbReference>
<dbReference type="PDB" id="5FMF">
    <property type="method" value="EM"/>
    <property type="resolution" value="6.00 A"/>
    <property type="chains" value="M=2-286"/>
</dbReference>
<dbReference type="PDB" id="5FYW">
    <property type="method" value="EM"/>
    <property type="resolution" value="4.35 A"/>
    <property type="chains" value="U=1-286"/>
</dbReference>
<dbReference type="PDB" id="5FZ5">
    <property type="method" value="EM"/>
    <property type="resolution" value="8.80 A"/>
    <property type="chains" value="U=1-286"/>
</dbReference>
<dbReference type="PDB" id="5OQJ">
    <property type="method" value="EM"/>
    <property type="resolution" value="4.70 A"/>
    <property type="chains" value="U=1-286"/>
</dbReference>
<dbReference type="PDB" id="5OQM">
    <property type="method" value="EM"/>
    <property type="resolution" value="5.80 A"/>
    <property type="chains" value="U=1-286"/>
</dbReference>
<dbReference type="PDB" id="5SVA">
    <property type="method" value="EM"/>
    <property type="resolution" value="15.30 A"/>
    <property type="chains" value="d=1-286"/>
</dbReference>
<dbReference type="PDB" id="6GYK">
    <property type="method" value="EM"/>
    <property type="resolution" value="5.10 A"/>
    <property type="chains" value="U=1-286"/>
</dbReference>
<dbReference type="PDB" id="6GYL">
    <property type="method" value="EM"/>
    <property type="resolution" value="4.80 A"/>
    <property type="chains" value="U=1-286"/>
</dbReference>
<dbReference type="PDB" id="6GYM">
    <property type="method" value="EM"/>
    <property type="resolution" value="6.70 A"/>
    <property type="chains" value="U=1-286"/>
</dbReference>
<dbReference type="PDB" id="7ML1">
    <property type="method" value="EM"/>
    <property type="resolution" value="4.00 A"/>
    <property type="chains" value="U=1-286"/>
</dbReference>
<dbReference type="PDB" id="7ML2">
    <property type="method" value="EM"/>
    <property type="resolution" value="3.40 A"/>
    <property type="chains" value="U=1-286"/>
</dbReference>
<dbReference type="PDB" id="7ML4">
    <property type="method" value="EM"/>
    <property type="resolution" value="3.10 A"/>
    <property type="chains" value="U=1-286"/>
</dbReference>
<dbReference type="PDB" id="7O4I">
    <property type="method" value="EM"/>
    <property type="resolution" value="3.20 A"/>
    <property type="chains" value="U=1-286"/>
</dbReference>
<dbReference type="PDB" id="7O4J">
    <property type="method" value="EM"/>
    <property type="resolution" value="2.90 A"/>
    <property type="chains" value="U=1-286"/>
</dbReference>
<dbReference type="PDB" id="7O72">
    <property type="method" value="EM"/>
    <property type="resolution" value="3.40 A"/>
    <property type="chains" value="U=1-286"/>
</dbReference>
<dbReference type="PDB" id="7O73">
    <property type="method" value="EM"/>
    <property type="resolution" value="3.40 A"/>
    <property type="chains" value="U=1-286"/>
</dbReference>
<dbReference type="PDB" id="7O75">
    <property type="method" value="EM"/>
    <property type="resolution" value="3.20 A"/>
    <property type="chains" value="U=1-286"/>
</dbReference>
<dbReference type="PDB" id="7OH9">
    <property type="method" value="EM"/>
    <property type="resolution" value="3.00 A"/>
    <property type="chains" value="L=1-286"/>
</dbReference>
<dbReference type="PDB" id="7OHA">
    <property type="method" value="EM"/>
    <property type="resolution" value="2.90 A"/>
    <property type="chains" value="L=1-286"/>
</dbReference>
<dbReference type="PDB" id="7ZS9">
    <property type="method" value="EM"/>
    <property type="resolution" value="3.10 A"/>
    <property type="chains" value="U=1-286"/>
</dbReference>
<dbReference type="PDB" id="7ZSA">
    <property type="method" value="EM"/>
    <property type="resolution" value="4.00 A"/>
    <property type="chains" value="U=1-286"/>
</dbReference>
<dbReference type="PDB" id="7ZSB">
    <property type="method" value="EM"/>
    <property type="resolution" value="6.60 A"/>
    <property type="chains" value="U=1-286"/>
</dbReference>
<dbReference type="PDB" id="8CEN">
    <property type="method" value="EM"/>
    <property type="resolution" value="3.00 A"/>
    <property type="chains" value="U=1-286"/>
</dbReference>
<dbReference type="PDB" id="8CEO">
    <property type="method" value="EM"/>
    <property type="resolution" value="3.60 A"/>
    <property type="chains" value="U=1-286"/>
</dbReference>
<dbReference type="PDB" id="8UMH">
    <property type="method" value="EM"/>
    <property type="resolution" value="4.10 A"/>
    <property type="chains" value="U=1-286"/>
</dbReference>
<dbReference type="PDB" id="8UMI">
    <property type="method" value="EM"/>
    <property type="resolution" value="3.70 A"/>
    <property type="chains" value="U=1-286"/>
</dbReference>
<dbReference type="PDB" id="8UOQ">
    <property type="method" value="EM"/>
    <property type="resolution" value="3.80 A"/>
    <property type="chains" value="U=1-286"/>
</dbReference>
<dbReference type="PDB" id="8UOT">
    <property type="method" value="EM"/>
    <property type="resolution" value="3.70 A"/>
    <property type="chains" value="U=1-286"/>
</dbReference>
<dbReference type="PDBsum" id="1NH2"/>
<dbReference type="PDBsum" id="1RM1"/>
<dbReference type="PDBsum" id="1YTF"/>
<dbReference type="PDBsum" id="5FMF"/>
<dbReference type="PDBsum" id="5FYW"/>
<dbReference type="PDBsum" id="5FZ5"/>
<dbReference type="PDBsum" id="5OQJ"/>
<dbReference type="PDBsum" id="5OQM"/>
<dbReference type="PDBsum" id="5SVA"/>
<dbReference type="PDBsum" id="6GYK"/>
<dbReference type="PDBsum" id="6GYL"/>
<dbReference type="PDBsum" id="6GYM"/>
<dbReference type="PDBsum" id="7ML1"/>
<dbReference type="PDBsum" id="7ML2"/>
<dbReference type="PDBsum" id="7ML4"/>
<dbReference type="PDBsum" id="7O4I"/>
<dbReference type="PDBsum" id="7O4J"/>
<dbReference type="PDBsum" id="7O72"/>
<dbReference type="PDBsum" id="7O73"/>
<dbReference type="PDBsum" id="7O75"/>
<dbReference type="PDBsum" id="7OH9"/>
<dbReference type="PDBsum" id="7OHA"/>
<dbReference type="PDBsum" id="7ZS9"/>
<dbReference type="PDBsum" id="7ZSA"/>
<dbReference type="PDBsum" id="7ZSB"/>
<dbReference type="PDBsum" id="8CEN"/>
<dbReference type="PDBsum" id="8CEO"/>
<dbReference type="PDBsum" id="8UMH"/>
<dbReference type="PDBsum" id="8UMI"/>
<dbReference type="PDBsum" id="8UOQ"/>
<dbReference type="PDBsum" id="8UOT"/>
<dbReference type="EMDB" id="EMD-0090"/>
<dbReference type="EMDB" id="EMD-0091"/>
<dbReference type="EMDB" id="EMD-0092"/>
<dbReference type="EMDB" id="EMD-12719"/>
<dbReference type="EMDB" id="EMD-12720"/>
<dbReference type="EMDB" id="EMD-12743"/>
<dbReference type="EMDB" id="EMD-12744"/>
<dbReference type="EMDB" id="EMD-12745"/>
<dbReference type="EMDB" id="EMD-12897"/>
<dbReference type="EMDB" id="EMD-14927"/>
<dbReference type="EMDB" id="EMD-14928"/>
<dbReference type="EMDB" id="EMD-14929"/>
<dbReference type="EMDB" id="EMD-3378"/>
<dbReference type="EMDB" id="EMD-3383"/>
<dbReference type="EMDB" id="EMD-3846"/>
<dbReference type="EMDB" id="EMD-3850"/>
<dbReference type="EMDB" id="EMD-42437"/>
<dbReference type="EMDB" id="EMD-42438"/>
<dbReference type="EMDB" id="EMD-8305"/>
<dbReference type="SMR" id="P32773"/>
<dbReference type="BioGRID" id="34592">
    <property type="interactions" value="280"/>
</dbReference>
<dbReference type="ComplexPortal" id="CPX-1633">
    <property type="entry name" value="Transcription factor TFIIA complex"/>
</dbReference>
<dbReference type="DIP" id="DIP-2347N"/>
<dbReference type="FunCoup" id="P32773">
    <property type="interactions" value="594"/>
</dbReference>
<dbReference type="IntAct" id="P32773">
    <property type="interactions" value="2"/>
</dbReference>
<dbReference type="MINT" id="P32773"/>
<dbReference type="STRING" id="4932.YOR194C"/>
<dbReference type="iPTMnet" id="P32773"/>
<dbReference type="PaxDb" id="4932-YOR194C"/>
<dbReference type="PeptideAtlas" id="P32773"/>
<dbReference type="TopDownProteomics" id="P32773"/>
<dbReference type="EnsemblFungi" id="YOR194C_mRNA">
    <property type="protein sequence ID" value="YOR194C"/>
    <property type="gene ID" value="YOR194C"/>
</dbReference>
<dbReference type="GeneID" id="854369"/>
<dbReference type="KEGG" id="sce:YOR194C"/>
<dbReference type="AGR" id="SGD:S000005720"/>
<dbReference type="SGD" id="S000005720">
    <property type="gene designation" value="TOA1"/>
</dbReference>
<dbReference type="VEuPathDB" id="FungiDB:YOR194C"/>
<dbReference type="eggNOG" id="KOG2652">
    <property type="taxonomic scope" value="Eukaryota"/>
</dbReference>
<dbReference type="GeneTree" id="ENSGT00940000169791"/>
<dbReference type="HOGENOM" id="CLU_030027_2_1_1"/>
<dbReference type="InParanoid" id="P32773"/>
<dbReference type="OMA" id="QKCTGEA"/>
<dbReference type="OrthoDB" id="6275927at2759"/>
<dbReference type="BioCyc" id="YEAST:G3O-33703-MONOMER"/>
<dbReference type="Reactome" id="R-SCE-674695">
    <property type="pathway name" value="RNA Polymerase II Pre-transcription Events"/>
</dbReference>
<dbReference type="Reactome" id="R-SCE-6807505">
    <property type="pathway name" value="RNA polymerase II transcribes snRNA genes"/>
</dbReference>
<dbReference type="Reactome" id="R-SCE-73776">
    <property type="pathway name" value="RNA Polymerase II Promoter Escape"/>
</dbReference>
<dbReference type="Reactome" id="R-SCE-73779">
    <property type="pathway name" value="RNA Polymerase II Transcription Pre-Initiation And Promoter Opening"/>
</dbReference>
<dbReference type="Reactome" id="R-SCE-75953">
    <property type="pathway name" value="RNA Polymerase II Transcription Initiation"/>
</dbReference>
<dbReference type="Reactome" id="R-SCE-76042">
    <property type="pathway name" value="RNA Polymerase II Transcription Initiation And Promoter Clearance"/>
</dbReference>
<dbReference type="Reactome" id="R-SCE-9018519">
    <property type="pathway name" value="Estrogen-dependent gene expression"/>
</dbReference>
<dbReference type="BioGRID-ORCS" id="854369">
    <property type="hits" value="2 hits in 10 CRISPR screens"/>
</dbReference>
<dbReference type="EvolutionaryTrace" id="P32773"/>
<dbReference type="PRO" id="PR:P32773"/>
<dbReference type="Proteomes" id="UP000002311">
    <property type="component" value="Chromosome XV"/>
</dbReference>
<dbReference type="RNAct" id="P32773">
    <property type="molecule type" value="protein"/>
</dbReference>
<dbReference type="GO" id="GO:0005737">
    <property type="term" value="C:cytoplasm"/>
    <property type="evidence" value="ECO:0007669"/>
    <property type="project" value="UniProtKB-SubCell"/>
</dbReference>
<dbReference type="GO" id="GO:0005634">
    <property type="term" value="C:nucleus"/>
    <property type="evidence" value="ECO:0000314"/>
    <property type="project" value="ComplexPortal"/>
</dbReference>
<dbReference type="GO" id="GO:0005672">
    <property type="term" value="C:transcription factor TFIIA complex"/>
    <property type="evidence" value="ECO:0000314"/>
    <property type="project" value="ComplexPortal"/>
</dbReference>
<dbReference type="GO" id="GO:0000979">
    <property type="term" value="F:RNA polymerase II core promoter sequence-specific DNA binding"/>
    <property type="evidence" value="ECO:0000315"/>
    <property type="project" value="CAFA"/>
</dbReference>
<dbReference type="GO" id="GO:0017025">
    <property type="term" value="F:TBP-class protein binding"/>
    <property type="evidence" value="ECO:0000353"/>
    <property type="project" value="CAFA"/>
</dbReference>
<dbReference type="GO" id="GO:0003712">
    <property type="term" value="F:transcription coregulator activity"/>
    <property type="evidence" value="ECO:0000314"/>
    <property type="project" value="SGD"/>
</dbReference>
<dbReference type="GO" id="GO:0045944">
    <property type="term" value="P:positive regulation of transcription by RNA polymerase II"/>
    <property type="evidence" value="ECO:0000314"/>
    <property type="project" value="ComplexPortal"/>
</dbReference>
<dbReference type="GO" id="GO:0060261">
    <property type="term" value="P:positive regulation of transcription initiation by RNA polymerase II"/>
    <property type="evidence" value="ECO:0000314"/>
    <property type="project" value="ComplexPortal"/>
</dbReference>
<dbReference type="GO" id="GO:0051123">
    <property type="term" value="P:RNA polymerase II preinitiation complex assembly"/>
    <property type="evidence" value="ECO:0000314"/>
    <property type="project" value="SGD"/>
</dbReference>
<dbReference type="GO" id="GO:0006366">
    <property type="term" value="P:transcription by RNA polymerase II"/>
    <property type="evidence" value="ECO:0000318"/>
    <property type="project" value="GO_Central"/>
</dbReference>
<dbReference type="GO" id="GO:0006367">
    <property type="term" value="P:transcription initiation at RNA polymerase II promoter"/>
    <property type="evidence" value="ECO:0000314"/>
    <property type="project" value="SGD"/>
</dbReference>
<dbReference type="CDD" id="cd07976">
    <property type="entry name" value="TFIIA_alpha_beta_like"/>
    <property type="match status" value="1"/>
</dbReference>
<dbReference type="DisProt" id="DP00104"/>
<dbReference type="FunFam" id="2.30.18.10:FF:000007">
    <property type="entry name" value="TOA1p TFIIA large subunit"/>
    <property type="match status" value="1"/>
</dbReference>
<dbReference type="FunFam" id="1.10.287.100:FF:000001">
    <property type="entry name" value="Transcription initiation factor IIA subunit"/>
    <property type="match status" value="1"/>
</dbReference>
<dbReference type="Gene3D" id="1.10.287.100">
    <property type="match status" value="1"/>
</dbReference>
<dbReference type="Gene3D" id="2.30.18.10">
    <property type="entry name" value="Transcription factor IIA (TFIIA), beta-barrel domain"/>
    <property type="match status" value="1"/>
</dbReference>
<dbReference type="InterPro" id="IPR004855">
    <property type="entry name" value="TFIIA_asu/bsu"/>
</dbReference>
<dbReference type="InterPro" id="IPR009088">
    <property type="entry name" value="TFIIA_b-brl"/>
</dbReference>
<dbReference type="PANTHER" id="PTHR12694">
    <property type="entry name" value="TRANSCRIPTION INITIATION FACTOR IIA SUBUNIT 1"/>
    <property type="match status" value="1"/>
</dbReference>
<dbReference type="PANTHER" id="PTHR12694:SF8">
    <property type="entry name" value="TRANSCRIPTION INITIATION FACTOR IIA SUBUNIT 1"/>
    <property type="match status" value="1"/>
</dbReference>
<dbReference type="Pfam" id="PF03153">
    <property type="entry name" value="TFIIA"/>
    <property type="match status" value="2"/>
</dbReference>
<dbReference type="SMART" id="SM01371">
    <property type="entry name" value="TFIIA"/>
    <property type="match status" value="1"/>
</dbReference>
<dbReference type="SUPFAM" id="SSF47396">
    <property type="entry name" value="Transcription factor IIA (TFIIA), alpha-helical domain"/>
    <property type="match status" value="1"/>
</dbReference>
<dbReference type="SUPFAM" id="SSF50784">
    <property type="entry name" value="Transcription factor IIA (TFIIA), beta-barrel domain"/>
    <property type="match status" value="1"/>
</dbReference>
<proteinExistence type="evidence at protein level"/>
<organism>
    <name type="scientific">Saccharomyces cerevisiae (strain ATCC 204508 / S288c)</name>
    <name type="common">Baker's yeast</name>
    <dbReference type="NCBI Taxonomy" id="559292"/>
    <lineage>
        <taxon>Eukaryota</taxon>
        <taxon>Fungi</taxon>
        <taxon>Dikarya</taxon>
        <taxon>Ascomycota</taxon>
        <taxon>Saccharomycotina</taxon>
        <taxon>Saccharomycetes</taxon>
        <taxon>Saccharomycetales</taxon>
        <taxon>Saccharomycetaceae</taxon>
        <taxon>Saccharomyces</taxon>
    </lineage>
</organism>
<sequence length="286" mass="32201">MSNAEASRVYEIIVESVVNEVREDFENAGIDEQTLQDLKNIWQKKLTETKVTTFSWDNQFNEGNINGVQNDLNFNLATPGVNSSEFNIKEENTGNEGLILPNINSNNNIPHSGETNINTNTVEATNNSGATLNTNTSGNTNADVTSQPKIEVKPEIELTINNANITTVENIDDESEKKDDEEKEEDVEKTRKEKEQIEQVKLQAKKEKRSALLDTDEVGSELDDSDDDYLISEGEEDGPDENLMLCLYDKVTRTKARWKCSLKDGVVTINRNDYTFQKAQVEAEWV</sequence>
<protein>
    <recommendedName>
        <fullName>Transcription initiation factor IIA large subunit</fullName>
        <shortName>TFIIA large subunit</shortName>
    </recommendedName>
    <alternativeName>
        <fullName>TFIIA 32 kDa subunit</fullName>
    </alternativeName>
</protein>
<evidence type="ECO:0000256" key="1">
    <source>
        <dbReference type="SAM" id="MobiDB-lite"/>
    </source>
</evidence>
<evidence type="ECO:0000269" key="2">
    <source>
    </source>
</evidence>
<evidence type="ECO:0000305" key="3"/>
<evidence type="ECO:0007829" key="4">
    <source>
        <dbReference type="PDB" id="1NH2"/>
    </source>
</evidence>
<evidence type="ECO:0007829" key="5">
    <source>
        <dbReference type="PDB" id="1RM1"/>
    </source>
</evidence>
<evidence type="ECO:0007829" key="6">
    <source>
        <dbReference type="PDB" id="7OHA"/>
    </source>
</evidence>
<feature type="chain" id="PRO_0000072617" description="Transcription initiation factor IIA large subunit">
    <location>
        <begin position="1"/>
        <end position="286"/>
    </location>
</feature>
<feature type="region of interest" description="Disordered" evidence="1">
    <location>
        <begin position="120"/>
        <end position="145"/>
    </location>
</feature>
<feature type="region of interest" description="Disordered" evidence="1">
    <location>
        <begin position="167"/>
        <end position="195"/>
    </location>
</feature>
<feature type="region of interest" description="Disordered" evidence="1">
    <location>
        <begin position="208"/>
        <end position="236"/>
    </location>
</feature>
<feature type="compositionally biased region" description="Basic and acidic residues" evidence="1">
    <location>
        <begin position="175"/>
        <end position="195"/>
    </location>
</feature>
<feature type="compositionally biased region" description="Acidic residues" evidence="1">
    <location>
        <begin position="214"/>
        <end position="236"/>
    </location>
</feature>
<feature type="sequence conflict" description="In Ref. 4; AAT93242." evidence="3" ref="4">
    <original>E</original>
    <variation>Q</variation>
    <location>
        <position position="15"/>
    </location>
</feature>
<feature type="helix" evidence="4">
    <location>
        <begin position="4"/>
        <end position="20"/>
    </location>
</feature>
<feature type="helix" evidence="4">
    <location>
        <begin position="22"/>
        <end position="27"/>
    </location>
</feature>
<feature type="helix" evidence="4">
    <location>
        <begin position="32"/>
        <end position="47"/>
    </location>
</feature>
<feature type="helix" evidence="5">
    <location>
        <begin position="57"/>
        <end position="60"/>
    </location>
</feature>
<feature type="strand" evidence="6">
    <location>
        <begin position="239"/>
        <end position="241"/>
    </location>
</feature>
<feature type="strand" evidence="4">
    <location>
        <begin position="243"/>
        <end position="254"/>
    </location>
</feature>
<feature type="strand" evidence="4">
    <location>
        <begin position="257"/>
        <end position="269"/>
    </location>
</feature>
<feature type="strand" evidence="4">
    <location>
        <begin position="272"/>
        <end position="284"/>
    </location>
</feature>
<accession>P32773</accession>
<accession>D6W2Q3</accession>
<accession>E9P936</accession>